<name>APOE_BOVIN</name>
<protein>
    <recommendedName>
        <fullName>Apolipoprotein E</fullName>
        <shortName>Apo-E</shortName>
    </recommendedName>
</protein>
<dbReference type="EMBL" id="X64839">
    <property type="protein sequence ID" value="CAA46051.1"/>
    <property type="molecule type" value="mRNA"/>
</dbReference>
<dbReference type="EMBL" id="X61171">
    <property type="protein sequence ID" value="CAA43479.1"/>
    <property type="molecule type" value="mRNA"/>
</dbReference>
<dbReference type="EMBL" id="BT021053">
    <property type="protein sequence ID" value="AAX09070.1"/>
    <property type="molecule type" value="mRNA"/>
</dbReference>
<dbReference type="EMBL" id="BC102620">
    <property type="protein sequence ID" value="AAI02621.1"/>
    <property type="molecule type" value="mRNA"/>
</dbReference>
<dbReference type="PIR" id="I45996">
    <property type="entry name" value="I45996"/>
</dbReference>
<dbReference type="PIR" id="S26478">
    <property type="entry name" value="S26478"/>
</dbReference>
<dbReference type="RefSeq" id="NP_776416.1">
    <property type="nucleotide sequence ID" value="NM_173991.2"/>
</dbReference>
<dbReference type="SMR" id="Q03247"/>
<dbReference type="FunCoup" id="Q03247">
    <property type="interactions" value="185"/>
</dbReference>
<dbReference type="STRING" id="9913.ENSBTAP00000013354"/>
<dbReference type="GlyConnect" id="813">
    <property type="glycosylation" value="2 O-Linked glycans (4 sites)"/>
</dbReference>
<dbReference type="GlyCosmos" id="Q03247">
    <property type="glycosylation" value="4 sites, 1 glycan"/>
</dbReference>
<dbReference type="GlyGen" id="Q03247">
    <property type="glycosylation" value="4 sites, 1 O-linked glycan (2 sites)"/>
</dbReference>
<dbReference type="iPTMnet" id="Q03247"/>
<dbReference type="PaxDb" id="9913-ENSBTAP00000013354"/>
<dbReference type="PeptideAtlas" id="Q03247"/>
<dbReference type="GeneID" id="281004"/>
<dbReference type="KEGG" id="bta:281004"/>
<dbReference type="CTD" id="348"/>
<dbReference type="eggNOG" id="ENOG502QVD6">
    <property type="taxonomic scope" value="Eukaryota"/>
</dbReference>
<dbReference type="HOGENOM" id="CLU_066029_0_0_1"/>
<dbReference type="InParanoid" id="Q03247"/>
<dbReference type="OrthoDB" id="9048614at2759"/>
<dbReference type="TreeFam" id="TF334458"/>
<dbReference type="Proteomes" id="UP000009136">
    <property type="component" value="Unplaced"/>
</dbReference>
<dbReference type="GO" id="GO:0042627">
    <property type="term" value="C:chylomicron"/>
    <property type="evidence" value="ECO:0000318"/>
    <property type="project" value="GO_Central"/>
</dbReference>
<dbReference type="GO" id="GO:0070062">
    <property type="term" value="C:extracellular exosome"/>
    <property type="evidence" value="ECO:0000250"/>
    <property type="project" value="UniProtKB"/>
</dbReference>
<dbReference type="GO" id="GO:0031012">
    <property type="term" value="C:extracellular matrix"/>
    <property type="evidence" value="ECO:0000250"/>
    <property type="project" value="UniProtKB"/>
</dbReference>
<dbReference type="GO" id="GO:0005615">
    <property type="term" value="C:extracellular space"/>
    <property type="evidence" value="ECO:0000250"/>
    <property type="project" value="UniProtKB"/>
</dbReference>
<dbReference type="GO" id="GO:1903561">
    <property type="term" value="C:extracellular vesicle"/>
    <property type="evidence" value="ECO:0000318"/>
    <property type="project" value="GO_Central"/>
</dbReference>
<dbReference type="GO" id="GO:0034364">
    <property type="term" value="C:high-density lipoprotein particle"/>
    <property type="evidence" value="ECO:0000250"/>
    <property type="project" value="UniProtKB"/>
</dbReference>
<dbReference type="GO" id="GO:0034363">
    <property type="term" value="C:intermediate-density lipoprotein particle"/>
    <property type="evidence" value="ECO:0000250"/>
    <property type="project" value="UniProtKB"/>
</dbReference>
<dbReference type="GO" id="GO:0034362">
    <property type="term" value="C:low-density lipoprotein particle"/>
    <property type="evidence" value="ECO:0000250"/>
    <property type="project" value="UniProtKB"/>
</dbReference>
<dbReference type="GO" id="GO:0097487">
    <property type="term" value="C:multivesicular body, internal vesicle"/>
    <property type="evidence" value="ECO:0000250"/>
    <property type="project" value="UniProtKB"/>
</dbReference>
<dbReference type="GO" id="GO:0034361">
    <property type="term" value="C:very-low-density lipoprotein particle"/>
    <property type="evidence" value="ECO:0000250"/>
    <property type="project" value="UniProtKB"/>
</dbReference>
<dbReference type="GO" id="GO:0001540">
    <property type="term" value="F:amyloid-beta binding"/>
    <property type="evidence" value="ECO:0000250"/>
    <property type="project" value="UniProtKB"/>
</dbReference>
<dbReference type="GO" id="GO:0120020">
    <property type="term" value="F:cholesterol transfer activity"/>
    <property type="evidence" value="ECO:0000318"/>
    <property type="project" value="GO_Central"/>
</dbReference>
<dbReference type="GO" id="GO:0043395">
    <property type="term" value="F:heparan sulfate proteoglycan binding"/>
    <property type="evidence" value="ECO:0000250"/>
    <property type="project" value="UniProtKB"/>
</dbReference>
<dbReference type="GO" id="GO:0008201">
    <property type="term" value="F:heparin binding"/>
    <property type="evidence" value="ECO:0000250"/>
    <property type="project" value="UniProtKB"/>
</dbReference>
<dbReference type="GO" id="GO:0042802">
    <property type="term" value="F:identical protein binding"/>
    <property type="evidence" value="ECO:0000250"/>
    <property type="project" value="UniProtKB"/>
</dbReference>
<dbReference type="GO" id="GO:0050750">
    <property type="term" value="F:low-density lipoprotein particle receptor binding"/>
    <property type="evidence" value="ECO:0000250"/>
    <property type="project" value="UniProtKB"/>
</dbReference>
<dbReference type="GO" id="GO:0060228">
    <property type="term" value="F:phosphatidylcholine-sterol O-acyltransferase activator activity"/>
    <property type="evidence" value="ECO:0000318"/>
    <property type="project" value="GO_Central"/>
</dbReference>
<dbReference type="GO" id="GO:0005543">
    <property type="term" value="F:phospholipid binding"/>
    <property type="evidence" value="ECO:0000318"/>
    <property type="project" value="GO_Central"/>
</dbReference>
<dbReference type="GO" id="GO:0055090">
    <property type="term" value="P:acylglycerol homeostasis"/>
    <property type="evidence" value="ECO:0000318"/>
    <property type="project" value="GO_Central"/>
</dbReference>
<dbReference type="GO" id="GO:0033344">
    <property type="term" value="P:cholesterol efflux"/>
    <property type="evidence" value="ECO:0000250"/>
    <property type="project" value="UniProtKB"/>
</dbReference>
<dbReference type="GO" id="GO:0008203">
    <property type="term" value="P:cholesterol metabolic process"/>
    <property type="evidence" value="ECO:0000318"/>
    <property type="project" value="GO_Central"/>
</dbReference>
<dbReference type="GO" id="GO:0034382">
    <property type="term" value="P:chylomicron remnant clearance"/>
    <property type="evidence" value="ECO:0000250"/>
    <property type="project" value="UniProtKB"/>
</dbReference>
<dbReference type="GO" id="GO:0034380">
    <property type="term" value="P:high-density lipoprotein particle assembly"/>
    <property type="evidence" value="ECO:0000250"/>
    <property type="project" value="UniProtKB"/>
</dbReference>
<dbReference type="GO" id="GO:0071831">
    <property type="term" value="P:intermediate-density lipoprotein particle clearance"/>
    <property type="evidence" value="ECO:0000250"/>
    <property type="project" value="UniProtKB"/>
</dbReference>
<dbReference type="GO" id="GO:0042158">
    <property type="term" value="P:lipoprotein biosynthetic process"/>
    <property type="evidence" value="ECO:0000250"/>
    <property type="project" value="UniProtKB"/>
</dbReference>
<dbReference type="GO" id="GO:0032438">
    <property type="term" value="P:melanosome organization"/>
    <property type="evidence" value="ECO:0000250"/>
    <property type="project" value="UniProtKB"/>
</dbReference>
<dbReference type="GO" id="GO:1905907">
    <property type="term" value="P:negative regulation of amyloid fibril formation"/>
    <property type="evidence" value="ECO:0000250"/>
    <property type="project" value="UniProtKB"/>
</dbReference>
<dbReference type="GO" id="GO:0033700">
    <property type="term" value="P:phospholipid efflux"/>
    <property type="evidence" value="ECO:0000318"/>
    <property type="project" value="GO_Central"/>
</dbReference>
<dbReference type="GO" id="GO:1900223">
    <property type="term" value="P:positive regulation of amyloid-beta clearance"/>
    <property type="evidence" value="ECO:0000250"/>
    <property type="project" value="UniProtKB"/>
</dbReference>
<dbReference type="GO" id="GO:0071830">
    <property type="term" value="P:triglyceride-rich lipoprotein particle clearance"/>
    <property type="evidence" value="ECO:0000250"/>
    <property type="project" value="UniProtKB"/>
</dbReference>
<dbReference type="GO" id="GO:0034447">
    <property type="term" value="P:very-low-density lipoprotein particle clearance"/>
    <property type="evidence" value="ECO:0000250"/>
    <property type="project" value="UniProtKB"/>
</dbReference>
<dbReference type="FunFam" id="1.20.120.20:FF:000002">
    <property type="entry name" value="Apolipoprotein E"/>
    <property type="match status" value="1"/>
</dbReference>
<dbReference type="FunFam" id="1.20.120.20:FF:000003">
    <property type="entry name" value="Apolipoprotein E"/>
    <property type="match status" value="1"/>
</dbReference>
<dbReference type="Gene3D" id="1.20.120.20">
    <property type="entry name" value="Apolipoprotein"/>
    <property type="match status" value="2"/>
</dbReference>
<dbReference type="InterPro" id="IPR000074">
    <property type="entry name" value="ApoA_E"/>
</dbReference>
<dbReference type="InterPro" id="IPR050163">
    <property type="entry name" value="Apolipoprotein_A1/A4/E"/>
</dbReference>
<dbReference type="PANTHER" id="PTHR18976">
    <property type="entry name" value="APOLIPOPROTEIN"/>
    <property type="match status" value="1"/>
</dbReference>
<dbReference type="PANTHER" id="PTHR18976:SF2">
    <property type="entry name" value="APOLIPOPROTEIN E"/>
    <property type="match status" value="1"/>
</dbReference>
<dbReference type="Pfam" id="PF01442">
    <property type="entry name" value="Apolipoprotein"/>
    <property type="match status" value="1"/>
</dbReference>
<dbReference type="SUPFAM" id="SSF58113">
    <property type="entry name" value="Apolipoprotein A-I"/>
    <property type="match status" value="1"/>
</dbReference>
<comment type="function">
    <text evidence="1">APOE is an apolipoprotein, a protein associating with lipid particles, that mainly functions in lipoprotein-mediated lipid transport between organs via the plasma and interstitial fluids. APOE is a core component of plasma lipoproteins and is involved in their production, conversion and clearance. Apolipoproteins are amphipathic molecules that interact both with lipids of the lipoprotein particle core and the aqueous environment of the plasma. As such, APOE associates with chylomicrons, chylomicron remnants, very low density lipoproteins (VLDL) and intermediate density lipoproteins (IDL) but shows a preferential binding to high-density lipoproteins (HDL). It also binds a wide range of cellular receptors including the LDL receptor/LDLR and the very low-density lipoprotein receptor/VLDLR that mediate the cellular uptake of the APOE-containing lipoprotein particles. Finally, APOE also has a heparin-binding activity and binds heparan-sulfate proteoglycans on the surface of cells, a property that supports the capture and the receptor-mediated uptake of APOE-containing lipoproteins by cells.</text>
</comment>
<comment type="subunit">
    <text evidence="1">Homotetramer. May interact with ABCA1; functionally associated with ABCA1 in the biogenesis of HDLs. May interact with APP/A4 amyloid-beta peptide; the interaction is extremely stable in vitro but its physiological significance is unclear. May interact with MAPT. May interact with MAP2. In the cerebrospinal fluid, interacts with secreted SORL1. Interacts with PMEL; this allows the loading of PMEL luminal fragment on ILVs to induce fibril nucleation.</text>
</comment>
<comment type="subcellular location">
    <subcellularLocation>
        <location evidence="1">Secreted</location>
    </subcellularLocation>
    <subcellularLocation>
        <location evidence="1">Secreted</location>
        <location evidence="1">Extracellular space</location>
    </subcellularLocation>
    <subcellularLocation>
        <location evidence="1">Secreted</location>
        <location evidence="1">Extracellular space</location>
        <location evidence="1">Extracellular matrix</location>
    </subcellularLocation>
    <subcellularLocation>
        <location evidence="1">Extracellular vesicle</location>
    </subcellularLocation>
    <subcellularLocation>
        <location evidence="1">Endosome</location>
        <location evidence="1">Multivesicular body</location>
    </subcellularLocation>
    <text evidence="1">In the plasma, APOE is associated with chylomicrons, chylomicrons remnants, VLDL, LDL and HDL lipoproteins. Lipid poor oligomeric APOE is associated with the extracellular matrix in a calcium- and heparan-sulfate proteoglycans-dependent manner. Lipidation induces the release from the extracellular matrix. Colocalizes with CD63 and PMEL at exosomes and in intraluminal vesicles within multivesicular endosomes.</text>
</comment>
<comment type="PTM">
    <text evidence="1">APOE exists as multiple glycosylated and sialylated glycoforms within cells and in plasma. The extent of glycosylation and sialylation are tissue and context specific.</text>
</comment>
<comment type="PTM">
    <text evidence="1">Glycated in plasma VLDL.</text>
</comment>
<comment type="PTM">
    <text evidence="1">Phosphorylated by FAM20C in the extracellular medium.</text>
</comment>
<comment type="similarity">
    <text evidence="5">Belongs to the apolipoprotein A1/A4/E family.</text>
</comment>
<organism>
    <name type="scientific">Bos taurus</name>
    <name type="common">Bovine</name>
    <dbReference type="NCBI Taxonomy" id="9913"/>
    <lineage>
        <taxon>Eukaryota</taxon>
        <taxon>Metazoa</taxon>
        <taxon>Chordata</taxon>
        <taxon>Craniata</taxon>
        <taxon>Vertebrata</taxon>
        <taxon>Euteleostomi</taxon>
        <taxon>Mammalia</taxon>
        <taxon>Eutheria</taxon>
        <taxon>Laurasiatheria</taxon>
        <taxon>Artiodactyla</taxon>
        <taxon>Ruminantia</taxon>
        <taxon>Pecora</taxon>
        <taxon>Bovidae</taxon>
        <taxon>Bovinae</taxon>
        <taxon>Bos</taxon>
    </lineage>
</organism>
<feature type="signal peptide" evidence="3">
    <location>
        <begin position="1"/>
        <end position="18"/>
    </location>
</feature>
<feature type="chain" id="PRO_0000001984" description="Apolipoprotein E">
    <location>
        <begin position="19"/>
        <end position="316"/>
    </location>
</feature>
<feature type="repeat" description="1">
    <location>
        <begin position="79"/>
        <end position="100"/>
    </location>
</feature>
<feature type="repeat" description="2">
    <location>
        <begin position="101"/>
        <end position="122"/>
    </location>
</feature>
<feature type="repeat" description="3">
    <location>
        <begin position="123"/>
        <end position="144"/>
    </location>
</feature>
<feature type="repeat" description="4">
    <location>
        <begin position="145"/>
        <end position="166"/>
    </location>
</feature>
<feature type="repeat" description="5">
    <location>
        <begin position="167"/>
        <end position="188"/>
    </location>
</feature>
<feature type="repeat" description="6">
    <location>
        <begin position="189"/>
        <end position="210"/>
    </location>
</feature>
<feature type="repeat" description="7">
    <location>
        <begin position="211"/>
        <end position="232"/>
    </location>
</feature>
<feature type="repeat" description="8">
    <location>
        <begin position="233"/>
        <end position="254"/>
    </location>
</feature>
<feature type="region of interest" description="8 X 22 AA approximate tandem repeats">
    <location>
        <begin position="79"/>
        <end position="254"/>
    </location>
</feature>
<feature type="region of interest" description="LDL and other lipoprotein receptors binding" evidence="1">
    <location>
        <begin position="157"/>
        <end position="167"/>
    </location>
</feature>
<feature type="region of interest" description="Lipid-binding and lipoprotein association" evidence="1">
    <location>
        <begin position="209"/>
        <end position="289"/>
    </location>
</feature>
<feature type="region of interest" description="Homooligomerization" evidence="1">
    <location>
        <begin position="265"/>
        <end position="316"/>
    </location>
</feature>
<feature type="region of interest" description="Specificity for association with VLDL" evidence="1">
    <location>
        <begin position="277"/>
        <end position="289"/>
    </location>
</feature>
<feature type="binding site" evidence="1">
    <location>
        <begin position="161"/>
        <end position="164"/>
    </location>
    <ligand>
        <name>heparin</name>
        <dbReference type="ChEBI" id="CHEBI:28304"/>
    </ligand>
</feature>
<feature type="binding site" evidence="1">
    <location>
        <begin position="228"/>
        <end position="235"/>
    </location>
    <ligand>
        <name>heparin</name>
        <dbReference type="ChEBI" id="CHEBI:28304"/>
    </ligand>
</feature>
<feature type="modified residue" description="Methionine sulfoxide" evidence="2">
    <location>
        <position position="142"/>
    </location>
</feature>
<feature type="modified residue" description="Phosphoserine" evidence="1">
    <location>
        <position position="146"/>
    </location>
</feature>
<feature type="glycosylation site" description="O-linked (GalNAc...) threonine" evidence="4">
    <location>
        <position position="32"/>
    </location>
</feature>
<feature type="glycosylation site" description="O-linked (GalNAc...) threonine" evidence="4">
    <location>
        <position position="211"/>
    </location>
</feature>
<feature type="glycosylation site" description="O-linked (GalNAc...) threonine" evidence="4">
    <location>
        <position position="309"/>
    </location>
</feature>
<feature type="glycosylation site" description="O-linked (GalNAc...) serine" evidence="4">
    <location>
        <position position="310"/>
    </location>
</feature>
<feature type="sequence conflict" description="In Ref. 2; CAA43479." evidence="5" ref="2">
    <original>RN</original>
    <variation>CG</variation>
    <location>
        <begin position="129"/>
        <end position="130"/>
    </location>
</feature>
<feature type="sequence conflict" description="In Ref. 3; AAX09070 and 4; AAI02621." evidence="5" ref="3 4">
    <original>P</original>
    <variation>R</variation>
    <location>
        <position position="162"/>
    </location>
</feature>
<sequence>MKVLWVAVVVALLAGCQADMEGELGPEEPLTTQQPRGKDSQPWEQALGRFWDYLRWVQTLSDQVQEELLNTQVIQELTALMEETMKEVKAYKEELEGQLGPMAQETQARVSKELQAAQARLGSDMEDLRNRLAQYRSEVQAMLGQSTEELRARMASHLRKLPKRLLRDADDLKKRLAVYQAGASEGAERSLSAIRERFGPLVEQGQSRAATLSTLAGQPLLERAEAWRQKLHGRLEEVGVRAQDRLDKIRQQLEEVHAKVEEQGNQMRLQAEAFQARLRSWFEPLVEDMQRQWAGLVEKVQLALRPSPTSPPSENH</sequence>
<proteinExistence type="evidence at protein level"/>
<keyword id="KW-0162">Chylomicron</keyword>
<keyword id="KW-0967">Endosome</keyword>
<keyword id="KW-0272">Extracellular matrix</keyword>
<keyword id="KW-0325">Glycoprotein</keyword>
<keyword id="KW-0345">HDL</keyword>
<keyword id="KW-0358">Heparin-binding</keyword>
<keyword id="KW-0445">Lipid transport</keyword>
<keyword id="KW-0446">Lipid-binding</keyword>
<keyword id="KW-0558">Oxidation</keyword>
<keyword id="KW-0597">Phosphoprotein</keyword>
<keyword id="KW-1185">Reference proteome</keyword>
<keyword id="KW-0677">Repeat</keyword>
<keyword id="KW-0964">Secreted</keyword>
<keyword id="KW-0732">Signal</keyword>
<keyword id="KW-0813">Transport</keyword>
<keyword id="KW-0850">VLDL</keyword>
<accession>Q03247</accession>
<accession>Q3T006</accession>
<accession>Q5E967</accession>
<evidence type="ECO:0000250" key="1">
    <source>
        <dbReference type="UniProtKB" id="P02649"/>
    </source>
</evidence>
<evidence type="ECO:0000250" key="2">
    <source>
        <dbReference type="UniProtKB" id="P08226"/>
    </source>
</evidence>
<evidence type="ECO:0000255" key="3"/>
<evidence type="ECO:0000269" key="4">
    <source>
    </source>
</evidence>
<evidence type="ECO:0000305" key="5"/>
<gene>
    <name type="primary">APOE</name>
</gene>
<reference key="1">
    <citation type="journal article" date="1993" name="Mamm. Genome">
        <title>Isolation, sequencing, and expression analysis of a bovine apolipoprotein E (APOE) cDNA and chromosomal localization of the APOE locus.</title>
        <authorList>
            <person name="Brzozowska A."/>
            <person name="Fries R."/>
            <person name="Womack J.E."/>
            <person name="Grimholt U."/>
            <person name="Myklebost O."/>
            <person name="Rogne S."/>
        </authorList>
    </citation>
    <scope>NUCLEOTIDE SEQUENCE [MRNA]</scope>
    <source>
        <tissue>Liver</tissue>
    </source>
</reference>
<reference key="2">
    <citation type="journal article" date="1991" name="J. Mol. Evol.">
        <title>Cloning and sequencing of bovine apolipoprotein E complementary DNA and molecular evolution of apolipoproteins E, C-I, and C-II.</title>
        <authorList>
            <person name="Yang Y.W."/>
            <person name="Chan L."/>
            <person name="Li W.H."/>
        </authorList>
    </citation>
    <scope>NUCLEOTIDE SEQUENCE [MRNA]</scope>
</reference>
<reference key="3">
    <citation type="journal article" date="2005" name="BMC Genomics">
        <title>Characterization of 954 bovine full-CDS cDNA sequences.</title>
        <authorList>
            <person name="Harhay G.P."/>
            <person name="Sonstegard T.S."/>
            <person name="Keele J.W."/>
            <person name="Heaton M.P."/>
            <person name="Clawson M.L."/>
            <person name="Snelling W.M."/>
            <person name="Wiedmann R.T."/>
            <person name="Van Tassell C.P."/>
            <person name="Smith T.P.L."/>
        </authorList>
    </citation>
    <scope>NUCLEOTIDE SEQUENCE [LARGE SCALE MRNA]</scope>
</reference>
<reference key="4">
    <citation type="submission" date="2005-08" db="EMBL/GenBank/DDBJ databases">
        <authorList>
            <consortium name="NIH - Mammalian Gene Collection (MGC) project"/>
        </authorList>
    </citation>
    <scope>NUCLEOTIDE SEQUENCE [LARGE SCALE MRNA]</scope>
    <source>
        <strain>Hereford</strain>
        <tissue>Testis</tissue>
    </source>
</reference>
<reference key="5">
    <citation type="journal article" date="2009" name="Mol. Cell. Proteomics">
        <title>Affinity enrichment and characterization of mucin core-1 type glycopeptides from bovine serum.</title>
        <authorList>
            <person name="Darula Z."/>
            <person name="Medzihradszky K.F."/>
        </authorList>
    </citation>
    <scope>GLYCOSYLATION AT THR-32; THR-211; THR-309 AND SER-310</scope>
    <scope>IDENTIFICATION BY MASS SPECTROMETRY</scope>
</reference>